<accession>B7UHU7</accession>
<name>YGFZ_ECO27</name>
<protein>
    <recommendedName>
        <fullName evidence="1">tRNA-modifying protein YgfZ</fullName>
    </recommendedName>
</protein>
<gene>
    <name evidence="1" type="primary">ygfZ</name>
    <name type="ordered locus">E2348C_3151</name>
</gene>
<dbReference type="EMBL" id="FM180568">
    <property type="protein sequence ID" value="CAS10699.1"/>
    <property type="molecule type" value="Genomic_DNA"/>
</dbReference>
<dbReference type="RefSeq" id="WP_000886076.1">
    <property type="nucleotide sequence ID" value="NC_011601.1"/>
</dbReference>
<dbReference type="SMR" id="B7UHU7"/>
<dbReference type="KEGG" id="ecg:E2348C_3151"/>
<dbReference type="HOGENOM" id="CLU_007884_6_1_6"/>
<dbReference type="Proteomes" id="UP000008205">
    <property type="component" value="Chromosome"/>
</dbReference>
<dbReference type="GO" id="GO:0005737">
    <property type="term" value="C:cytoplasm"/>
    <property type="evidence" value="ECO:0007669"/>
    <property type="project" value="UniProtKB-SubCell"/>
</dbReference>
<dbReference type="GO" id="GO:0005542">
    <property type="term" value="F:folic acid binding"/>
    <property type="evidence" value="ECO:0007669"/>
    <property type="project" value="UniProtKB-UniRule"/>
</dbReference>
<dbReference type="GO" id="GO:0016226">
    <property type="term" value="P:iron-sulfur cluster assembly"/>
    <property type="evidence" value="ECO:0007669"/>
    <property type="project" value="TreeGrafter"/>
</dbReference>
<dbReference type="GO" id="GO:0009451">
    <property type="term" value="P:RNA modification"/>
    <property type="evidence" value="ECO:0007669"/>
    <property type="project" value="InterPro"/>
</dbReference>
<dbReference type="GO" id="GO:0008033">
    <property type="term" value="P:tRNA processing"/>
    <property type="evidence" value="ECO:0007669"/>
    <property type="project" value="UniProtKB-UniRule"/>
</dbReference>
<dbReference type="FunFam" id="2.40.30.160:FF:000001">
    <property type="entry name" value="tRNA-modifying protein YgfZ"/>
    <property type="match status" value="1"/>
</dbReference>
<dbReference type="FunFam" id="3.30.70.1400:FF:000002">
    <property type="entry name" value="tRNA-modifying protein YgfZ"/>
    <property type="match status" value="1"/>
</dbReference>
<dbReference type="FunFam" id="3.30.70.1630:FF:000001">
    <property type="entry name" value="tRNA-modifying protein YgfZ"/>
    <property type="match status" value="1"/>
</dbReference>
<dbReference type="Gene3D" id="2.40.30.160">
    <property type="match status" value="1"/>
</dbReference>
<dbReference type="Gene3D" id="3.30.70.1630">
    <property type="match status" value="1"/>
</dbReference>
<dbReference type="Gene3D" id="3.30.70.1400">
    <property type="entry name" value="Aminomethyltransferase beta-barrel domains"/>
    <property type="match status" value="1"/>
</dbReference>
<dbReference type="HAMAP" id="MF_01175">
    <property type="entry name" value="tRNA_modifying_YgfZ"/>
    <property type="match status" value="1"/>
</dbReference>
<dbReference type="InterPro" id="IPR006222">
    <property type="entry name" value="GCV_T_N"/>
</dbReference>
<dbReference type="InterPro" id="IPR029043">
    <property type="entry name" value="GcvT/YgfZ_C"/>
</dbReference>
<dbReference type="InterPro" id="IPR023758">
    <property type="entry name" value="tRNA-modifying_YgfZ"/>
</dbReference>
<dbReference type="InterPro" id="IPR045179">
    <property type="entry name" value="YgfZ/GcvT"/>
</dbReference>
<dbReference type="InterPro" id="IPR017703">
    <property type="entry name" value="YgfZ/GcvT_CS"/>
</dbReference>
<dbReference type="InterPro" id="IPR048451">
    <property type="entry name" value="YgfZ_barrel"/>
</dbReference>
<dbReference type="NCBIfam" id="NF007110">
    <property type="entry name" value="PRK09559.1"/>
    <property type="match status" value="1"/>
</dbReference>
<dbReference type="NCBIfam" id="TIGR03317">
    <property type="entry name" value="ygfZ_signature"/>
    <property type="match status" value="1"/>
</dbReference>
<dbReference type="PANTHER" id="PTHR22602">
    <property type="entry name" value="TRANSFERASE CAF17, MITOCHONDRIAL-RELATED"/>
    <property type="match status" value="1"/>
</dbReference>
<dbReference type="PANTHER" id="PTHR22602:SF0">
    <property type="entry name" value="TRANSFERASE CAF17, MITOCHONDRIAL-RELATED"/>
    <property type="match status" value="1"/>
</dbReference>
<dbReference type="Pfam" id="PF01571">
    <property type="entry name" value="GCV_T"/>
    <property type="match status" value="1"/>
</dbReference>
<dbReference type="Pfam" id="PF21130">
    <property type="entry name" value="YgfZ_barrel"/>
    <property type="match status" value="1"/>
</dbReference>
<dbReference type="SUPFAM" id="SSF101790">
    <property type="entry name" value="Aminomethyltransferase beta-barrel domain"/>
    <property type="match status" value="1"/>
</dbReference>
<dbReference type="SUPFAM" id="SSF103025">
    <property type="entry name" value="Folate-binding domain"/>
    <property type="match status" value="1"/>
</dbReference>
<comment type="function">
    <text evidence="1">Folate-binding protein involved in regulating the level of ATP-DnaA and in the modification of some tRNAs. It is probably a key factor in regulatory networks that act via tRNA modification, such as initiation of chromosomal replication.</text>
</comment>
<comment type="subcellular location">
    <subcellularLocation>
        <location evidence="1">Cytoplasm</location>
    </subcellularLocation>
</comment>
<comment type="similarity">
    <text evidence="1">Belongs to the tRNA-modifying YgfZ family.</text>
</comment>
<sequence>MAFTPFPPRQPTASARLPLTLMTLDDWALATITGADSEKYMQGQVTADVSQMTEDQHLLAAHCDAKGKMWSNLRLFRDGDGFAWIERRSVREPQLTELKKYAVFSKVTIAPDDERVLLGVAGFQARAALANLFSELPSREKQVVKEGATTLLWFEHPAERFLIVIDEATANMLTDKLRGEAELNNSQQWLALNIEAGFPVIDAANSGQFIPQATNLQALGGISFKKGCYTGQEMVARAKFRGANKRALWLLKGSASRLPEAGEDLELKMGENWRRTGTVLAAVKLEDGQVVVQVVMNNDMEPDSIFRVRDDANTLRIEPLPYSLEE</sequence>
<proteinExistence type="inferred from homology"/>
<reference key="1">
    <citation type="journal article" date="2009" name="J. Bacteriol.">
        <title>Complete genome sequence and comparative genome analysis of enteropathogenic Escherichia coli O127:H6 strain E2348/69.</title>
        <authorList>
            <person name="Iguchi A."/>
            <person name="Thomson N.R."/>
            <person name="Ogura Y."/>
            <person name="Saunders D."/>
            <person name="Ooka T."/>
            <person name="Henderson I.R."/>
            <person name="Harris D."/>
            <person name="Asadulghani M."/>
            <person name="Kurokawa K."/>
            <person name="Dean P."/>
            <person name="Kenny B."/>
            <person name="Quail M.A."/>
            <person name="Thurston S."/>
            <person name="Dougan G."/>
            <person name="Hayashi T."/>
            <person name="Parkhill J."/>
            <person name="Frankel G."/>
        </authorList>
    </citation>
    <scope>NUCLEOTIDE SEQUENCE [LARGE SCALE GENOMIC DNA]</scope>
    <source>
        <strain>E2348/69 / EPEC</strain>
    </source>
</reference>
<feature type="chain" id="PRO_1000164409" description="tRNA-modifying protein YgfZ">
    <location>
        <begin position="1"/>
        <end position="326"/>
    </location>
</feature>
<feature type="binding site" evidence="1">
    <location>
        <position position="27"/>
    </location>
    <ligand>
        <name>folate</name>
        <dbReference type="ChEBI" id="CHEBI:62501"/>
    </ligand>
</feature>
<feature type="binding site" evidence="1">
    <location>
        <position position="189"/>
    </location>
    <ligand>
        <name>folate</name>
        <dbReference type="ChEBI" id="CHEBI:62501"/>
    </ligand>
</feature>
<evidence type="ECO:0000255" key="1">
    <source>
        <dbReference type="HAMAP-Rule" id="MF_01175"/>
    </source>
</evidence>
<organism>
    <name type="scientific">Escherichia coli O127:H6 (strain E2348/69 / EPEC)</name>
    <dbReference type="NCBI Taxonomy" id="574521"/>
    <lineage>
        <taxon>Bacteria</taxon>
        <taxon>Pseudomonadati</taxon>
        <taxon>Pseudomonadota</taxon>
        <taxon>Gammaproteobacteria</taxon>
        <taxon>Enterobacterales</taxon>
        <taxon>Enterobacteriaceae</taxon>
        <taxon>Escherichia</taxon>
    </lineage>
</organism>
<keyword id="KW-0963">Cytoplasm</keyword>
<keyword id="KW-0290">Folate-binding</keyword>
<keyword id="KW-1185">Reference proteome</keyword>
<keyword id="KW-0819">tRNA processing</keyword>